<comment type="subcellular location">
    <subcellularLocation>
        <location evidence="1">Virion</location>
    </subcellularLocation>
</comment>
<accession>O10338</accession>
<sequence>MRTRSVDQDSKLCFFKALGLRPQEPLRRVACSVANKCAAKQYKRFKGVADIKRELGRFNLPPAQFNEALYLCRRHNAAWCTTDNWDRCGSVNERHVYEVDFDAQTKAVTERFYVCVQCFV</sequence>
<feature type="chain" id="PRO_0000132884" description="Putative 15 kDa capsid protein">
    <location>
        <begin position="1"/>
        <end position="120"/>
    </location>
</feature>
<dbReference type="EMBL" id="U75930">
    <property type="protein sequence ID" value="AAC59087.2"/>
    <property type="molecule type" value="Genomic_DNA"/>
</dbReference>
<dbReference type="PIR" id="T10357">
    <property type="entry name" value="T10357"/>
</dbReference>
<dbReference type="RefSeq" id="NP_046244.2">
    <property type="nucleotide sequence ID" value="NC_001875.2"/>
</dbReference>
<dbReference type="SMR" id="O10338"/>
<dbReference type="KEGG" id="vg:912010"/>
<dbReference type="OrthoDB" id="19150at10239"/>
<dbReference type="Proteomes" id="UP000009248">
    <property type="component" value="Genome"/>
</dbReference>
<dbReference type="GO" id="GO:0019028">
    <property type="term" value="C:viral capsid"/>
    <property type="evidence" value="ECO:0007669"/>
    <property type="project" value="UniProtKB-KW"/>
</dbReference>
<organismHost>
    <name type="scientific">Orgyia pseudotsugata</name>
    <name type="common">Douglas-fir tussock moth</name>
    <dbReference type="NCBI Taxonomy" id="33414"/>
</organismHost>
<proteinExistence type="predicted"/>
<gene>
    <name type="primary">P15</name>
    <name type="ORF">ORF88</name>
</gene>
<protein>
    <recommendedName>
        <fullName>Putative 15 kDa capsid protein</fullName>
    </recommendedName>
</protein>
<evidence type="ECO:0000305" key="1"/>
<name>VP15_NPVOP</name>
<reference key="1">
    <citation type="journal article" date="1997" name="Virology">
        <title>The sequence of the Orgyia pseudotsugata multinucleocapsid nuclear polyhedrosis virus genome.</title>
        <authorList>
            <person name="Ahrens C.H."/>
            <person name="Russell R.R."/>
            <person name="Funk C.J."/>
            <person name="Evans J."/>
            <person name="Harwood S."/>
            <person name="Rohrmann G.F."/>
        </authorList>
    </citation>
    <scope>NUCLEOTIDE SEQUENCE [LARGE SCALE GENOMIC DNA]</scope>
</reference>
<reference key="2">
    <citation type="submission" date="2010-10" db="EMBL/GenBank/DDBJ databases">
        <authorList>
            <person name="Rohrmann G.F."/>
        </authorList>
    </citation>
    <scope>SEQUENCE REVISION</scope>
</reference>
<keyword id="KW-0167">Capsid protein</keyword>
<keyword id="KW-1185">Reference proteome</keyword>
<keyword id="KW-0946">Virion</keyword>
<organism>
    <name type="scientific">Orgyia pseudotsugata multicapsid polyhedrosis virus</name>
    <name type="common">OpMNPV</name>
    <dbReference type="NCBI Taxonomy" id="262177"/>
    <lineage>
        <taxon>Viruses</taxon>
        <taxon>Viruses incertae sedis</taxon>
        <taxon>Naldaviricetes</taxon>
        <taxon>Lefavirales</taxon>
        <taxon>Baculoviridae</taxon>
        <taxon>Alphabaculovirus</taxon>
        <taxon>Alphabaculovirus orpseudotsugatae</taxon>
    </lineage>
</organism>